<reference key="1">
    <citation type="journal article" date="2001" name="Lancet">
        <title>Whole genome sequencing of meticillin-resistant Staphylococcus aureus.</title>
        <authorList>
            <person name="Kuroda M."/>
            <person name="Ohta T."/>
            <person name="Uchiyama I."/>
            <person name="Baba T."/>
            <person name="Yuzawa H."/>
            <person name="Kobayashi I."/>
            <person name="Cui L."/>
            <person name="Oguchi A."/>
            <person name="Aoki K."/>
            <person name="Nagai Y."/>
            <person name="Lian J.-Q."/>
            <person name="Ito T."/>
            <person name="Kanamori M."/>
            <person name="Matsumaru H."/>
            <person name="Maruyama A."/>
            <person name="Murakami H."/>
            <person name="Hosoyama A."/>
            <person name="Mizutani-Ui Y."/>
            <person name="Takahashi N.K."/>
            <person name="Sawano T."/>
            <person name="Inoue R."/>
            <person name="Kaito C."/>
            <person name="Sekimizu K."/>
            <person name="Hirakawa H."/>
            <person name="Kuhara S."/>
            <person name="Goto S."/>
            <person name="Yabuzaki J."/>
            <person name="Kanehisa M."/>
            <person name="Yamashita A."/>
            <person name="Oshima K."/>
            <person name="Furuya K."/>
            <person name="Yoshino C."/>
            <person name="Shiba T."/>
            <person name="Hattori M."/>
            <person name="Ogasawara N."/>
            <person name="Hayashi H."/>
            <person name="Hiramatsu K."/>
        </authorList>
    </citation>
    <scope>NUCLEOTIDE SEQUENCE [LARGE SCALE GENOMIC DNA]</scope>
    <source>
        <strain>Mu50 / ATCC 700699</strain>
    </source>
</reference>
<name>PFLB_STAAM</name>
<dbReference type="EC" id="2.3.1.54" evidence="1"/>
<dbReference type="EMBL" id="BA000017">
    <property type="protein sequence ID" value="BAB56388.1"/>
    <property type="molecule type" value="Genomic_DNA"/>
</dbReference>
<dbReference type="RefSeq" id="WP_000894660.1">
    <property type="nucleotide sequence ID" value="NC_002758.2"/>
</dbReference>
<dbReference type="SMR" id="Q99WZ7"/>
<dbReference type="KEGG" id="sav:SAV0226"/>
<dbReference type="HOGENOM" id="CLU_023898_0_0_9"/>
<dbReference type="PhylomeDB" id="Q99WZ7"/>
<dbReference type="UniPathway" id="UPA00920">
    <property type="reaction ID" value="UER00891"/>
</dbReference>
<dbReference type="Proteomes" id="UP000002481">
    <property type="component" value="Chromosome"/>
</dbReference>
<dbReference type="GO" id="GO:0005829">
    <property type="term" value="C:cytosol"/>
    <property type="evidence" value="ECO:0007669"/>
    <property type="project" value="TreeGrafter"/>
</dbReference>
<dbReference type="GO" id="GO:0008861">
    <property type="term" value="F:formate C-acetyltransferase activity"/>
    <property type="evidence" value="ECO:0007669"/>
    <property type="project" value="UniProtKB-EC"/>
</dbReference>
<dbReference type="GO" id="GO:0006006">
    <property type="term" value="P:glucose metabolic process"/>
    <property type="evidence" value="ECO:0007669"/>
    <property type="project" value="UniProtKB-KW"/>
</dbReference>
<dbReference type="CDD" id="cd01678">
    <property type="entry name" value="PFL1"/>
    <property type="match status" value="1"/>
</dbReference>
<dbReference type="FunFam" id="3.20.70.20:FF:000003">
    <property type="entry name" value="Formate acetyltransferase"/>
    <property type="match status" value="1"/>
</dbReference>
<dbReference type="Gene3D" id="3.20.70.20">
    <property type="match status" value="1"/>
</dbReference>
<dbReference type="InterPro" id="IPR050244">
    <property type="entry name" value="Auton_GlycylRad_Cofactor"/>
</dbReference>
<dbReference type="InterPro" id="IPR005949">
    <property type="entry name" value="Form_AcTrfase"/>
</dbReference>
<dbReference type="InterPro" id="IPR019777">
    <property type="entry name" value="Form_AcTrfase_GR_CS"/>
</dbReference>
<dbReference type="InterPro" id="IPR001150">
    <property type="entry name" value="Gly_radical"/>
</dbReference>
<dbReference type="InterPro" id="IPR004184">
    <property type="entry name" value="PFL_dom"/>
</dbReference>
<dbReference type="NCBIfam" id="TIGR01255">
    <property type="entry name" value="pyr_form_ly_1"/>
    <property type="match status" value="1"/>
</dbReference>
<dbReference type="PANTHER" id="PTHR30191">
    <property type="entry name" value="FORMATE ACETYLTRANSFERASE"/>
    <property type="match status" value="1"/>
</dbReference>
<dbReference type="PANTHER" id="PTHR30191:SF0">
    <property type="entry name" value="FORMATE ACETYLTRANSFERASE 1"/>
    <property type="match status" value="1"/>
</dbReference>
<dbReference type="Pfam" id="PF01228">
    <property type="entry name" value="Gly_radical"/>
    <property type="match status" value="1"/>
</dbReference>
<dbReference type="Pfam" id="PF02901">
    <property type="entry name" value="PFL-like"/>
    <property type="match status" value="1"/>
</dbReference>
<dbReference type="PIRSF" id="PIRSF000379">
    <property type="entry name" value="For_Ac_trans_1"/>
    <property type="match status" value="1"/>
</dbReference>
<dbReference type="SUPFAM" id="SSF51998">
    <property type="entry name" value="PFL-like glycyl radical enzymes"/>
    <property type="match status" value="1"/>
</dbReference>
<dbReference type="PROSITE" id="PS00850">
    <property type="entry name" value="GLY_RADICAL_1"/>
    <property type="match status" value="1"/>
</dbReference>
<dbReference type="PROSITE" id="PS51149">
    <property type="entry name" value="GLY_RADICAL_2"/>
    <property type="match status" value="1"/>
</dbReference>
<dbReference type="PROSITE" id="PS51554">
    <property type="entry name" value="PFL"/>
    <property type="match status" value="1"/>
</dbReference>
<gene>
    <name type="primary">pflB</name>
    <name type="ordered locus">SAV0226</name>
</gene>
<accession>Q99WZ7</accession>
<organism>
    <name type="scientific">Staphylococcus aureus (strain Mu50 / ATCC 700699)</name>
    <dbReference type="NCBI Taxonomy" id="158878"/>
    <lineage>
        <taxon>Bacteria</taxon>
        <taxon>Bacillati</taxon>
        <taxon>Bacillota</taxon>
        <taxon>Bacilli</taxon>
        <taxon>Bacillales</taxon>
        <taxon>Staphylococcaceae</taxon>
        <taxon>Staphylococcus</taxon>
    </lineage>
</organism>
<evidence type="ECO:0000250" key="1">
    <source>
        <dbReference type="UniProtKB" id="P09373"/>
    </source>
</evidence>
<evidence type="ECO:0000250" key="2">
    <source>
        <dbReference type="UniProtKB" id="Q5HJF4"/>
    </source>
</evidence>
<evidence type="ECO:0000255" key="3">
    <source>
        <dbReference type="PROSITE-ProRule" id="PRU00493"/>
    </source>
</evidence>
<evidence type="ECO:0000255" key="4">
    <source>
        <dbReference type="PROSITE-ProRule" id="PRU00887"/>
    </source>
</evidence>
<evidence type="ECO:0000305" key="5"/>
<keyword id="KW-0012">Acyltransferase</keyword>
<keyword id="KW-0119">Carbohydrate metabolism</keyword>
<keyword id="KW-0963">Cytoplasm</keyword>
<keyword id="KW-0313">Glucose metabolism</keyword>
<keyword id="KW-0556">Organic radical</keyword>
<keyword id="KW-0808">Transferase</keyword>
<protein>
    <recommendedName>
        <fullName>Formate acetyltransferase</fullName>
        <ecNumber evidence="1">2.3.1.54</ecNumber>
    </recommendedName>
    <alternativeName>
        <fullName>Pyruvate formate-lyase</fullName>
    </alternativeName>
</protein>
<feature type="chain" id="PRO_0000271723" description="Formate acetyltransferase">
    <location>
        <begin position="1"/>
        <end position="749"/>
    </location>
</feature>
<feature type="domain" description="PFL" evidence="4">
    <location>
        <begin position="3"/>
        <end position="619"/>
    </location>
</feature>
<feature type="domain" description="Glycine radical" evidence="3">
    <location>
        <begin position="626"/>
        <end position="749"/>
    </location>
</feature>
<feature type="active site" description="S-acetylcysteine intermediate" evidence="1">
    <location>
        <position position="413"/>
    </location>
</feature>
<feature type="active site" description="Cysteine radical intermediate" evidence="1">
    <location>
        <position position="414"/>
    </location>
</feature>
<feature type="modified residue" description="Glycine radical" evidence="3">
    <location>
        <position position="724"/>
    </location>
</feature>
<comment type="function">
    <text evidence="1">Catalyzes the conversion of pyruvate to formate and acetyl-CoA.</text>
</comment>
<comment type="catalytic activity">
    <reaction evidence="1">
        <text>formate + acetyl-CoA = pyruvate + CoA</text>
        <dbReference type="Rhea" id="RHEA:11844"/>
        <dbReference type="ChEBI" id="CHEBI:15361"/>
        <dbReference type="ChEBI" id="CHEBI:15740"/>
        <dbReference type="ChEBI" id="CHEBI:57287"/>
        <dbReference type="ChEBI" id="CHEBI:57288"/>
        <dbReference type="EC" id="2.3.1.54"/>
    </reaction>
</comment>
<comment type="pathway">
    <text>Fermentation; pyruvate fermentation; formate from pyruvate: step 1/1.</text>
</comment>
<comment type="subunit">
    <text evidence="1">Homodimer.</text>
</comment>
<comment type="subcellular location">
    <subcellularLocation>
        <location evidence="2">Cytoplasm</location>
    </subcellularLocation>
</comment>
<comment type="miscellaneous">
    <text evidence="1">Several mechanisms have been proposed based on complexes formed with substrate analogs. After activation by the glycine radical, the cysteine radical, Cys-414, can abstract hydrogen atoms from the other active site cysteine, Cys-413, and from coenzyme A, and it can also transfer hydrogen atoms to product radicals. The other active site cysteine can attack the central carbonyl of pyruvate and covalently bind the product acetyl group.</text>
</comment>
<comment type="similarity">
    <text evidence="5">Belongs to the glycyl radical enzyme (GRE) family. PFL subfamily.</text>
</comment>
<sequence length="749" mass="84862">MLETNKNHATAWQGFKNGRWNRHVDVREFIQLNYTLYEGNDSFLAGPTEATSKLWEQVMQLSKEERERGGMWDMDTKVASTITSHDAGYLDKDLETIVGVQTEKPFKRSMQPFGGIRMAKAACEAYGYELDEETEKIFTDYRKTHNQGVFDAYSREMLNCRKAGVITGLPDAYGRGRIIGDYRRVALYGVDFLMEEKMHDFNTMSTEMSEDVIRLREELSEQYRALKELKELGQKYGFDLSRPAENFKEAVQWLYLAYLAAIKEQNGAAMSLGRTSTFLDIYAERDLKAGVITESEVQEIIDHFIMKLRIVKFARTPDYNELFSGDPTWVTESIGGVGIDGRPLVTKNSFRFLHSLDNLGPAPEPNLTVLWSVRLPDNFKTYCAKMSIKTSSIQYENDDIMRESYGDDYGIACCVSAMTIGKQMQFFGARANLAKTLLYAINGGKDEKSGAQVGPNFEGINSEVLEYDEVFKKFDQMMDWLAGVYINSLNVIHYMHDKYSYERIEMALHDTEIVRTMATGIAGLSVAADSLSAIKYAQVKPIRNEEGLVVDFEIEGDFPKYGNNDDRVDDIAVDLVERFMTKLRSHKTYRDSEHTMSVLTITSNVVYGKKTGNTPDGRKAGEPFAPGANPMHGRDQKGALSSLSSVAKIPYDCCKDGISNTFSIVPKSLGKEPEDQNRNLTSMLDGYAMQCGHHLNINVFNRETLIDAMEHPEEYPQLTIRVSGYAVNFIKLTREQQLDVISRTFHESM</sequence>
<proteinExistence type="inferred from homology"/>